<proteinExistence type="inferred from homology"/>
<protein>
    <recommendedName>
        <fullName evidence="1">UPF0441 protein YgiB</fullName>
    </recommendedName>
</protein>
<dbReference type="EMBL" id="CP000026">
    <property type="protein sequence ID" value="AAV78891.1"/>
    <property type="molecule type" value="Genomic_DNA"/>
</dbReference>
<dbReference type="RefSeq" id="WP_000831524.1">
    <property type="nucleotide sequence ID" value="NC_006511.1"/>
</dbReference>
<dbReference type="KEGG" id="spt:SPA3056"/>
<dbReference type="HOGENOM" id="CLU_095624_0_0_6"/>
<dbReference type="Proteomes" id="UP000008185">
    <property type="component" value="Chromosome"/>
</dbReference>
<dbReference type="HAMAP" id="MF_01188">
    <property type="entry name" value="UPF0441"/>
    <property type="match status" value="1"/>
</dbReference>
<dbReference type="InterPro" id="IPR009576">
    <property type="entry name" value="Biofilm_formation_YgiB"/>
</dbReference>
<dbReference type="NCBIfam" id="NF008655">
    <property type="entry name" value="PRK11653.1"/>
    <property type="match status" value="1"/>
</dbReference>
<dbReference type="Pfam" id="PF06693">
    <property type="entry name" value="DUF1190"/>
    <property type="match status" value="1"/>
</dbReference>
<name>YGIB_SALPA</name>
<organism>
    <name type="scientific">Salmonella paratyphi A (strain ATCC 9150 / SARB42)</name>
    <dbReference type="NCBI Taxonomy" id="295319"/>
    <lineage>
        <taxon>Bacteria</taxon>
        <taxon>Pseudomonadati</taxon>
        <taxon>Pseudomonadota</taxon>
        <taxon>Gammaproteobacteria</taxon>
        <taxon>Enterobacterales</taxon>
        <taxon>Enterobacteriaceae</taxon>
        <taxon>Salmonella</taxon>
    </lineage>
</organism>
<feature type="chain" id="PRO_0000293640" description="UPF0441 protein YgiB">
    <location>
        <begin position="1"/>
        <end position="223"/>
    </location>
</feature>
<feature type="region of interest" description="Disordered" evidence="2">
    <location>
        <begin position="178"/>
        <end position="223"/>
    </location>
</feature>
<feature type="compositionally biased region" description="Low complexity" evidence="2">
    <location>
        <begin position="178"/>
        <end position="195"/>
    </location>
</feature>
<feature type="compositionally biased region" description="Polar residues" evidence="2">
    <location>
        <begin position="204"/>
        <end position="223"/>
    </location>
</feature>
<evidence type="ECO:0000255" key="1">
    <source>
        <dbReference type="HAMAP-Rule" id="MF_01188"/>
    </source>
</evidence>
<evidence type="ECO:0000256" key="2">
    <source>
        <dbReference type="SAM" id="MobiDB-lite"/>
    </source>
</evidence>
<comment type="similarity">
    <text evidence="1">Belongs to the UPF0441 family.</text>
</comment>
<sequence length="223" mass="23357">MKRTKSIHHASFRKSWSARHLTPVALAVTAVFMLAGCEKSDETVSLYQNADDCSAANPGKSAECTAAYNNALKEAERTAPKYATREDCVAEFGEGQCQQAPAQAGMAPENQAQAQQSSGSFWMPLMAGYMMGRLMGGGAGFAQQPLFSSKNPASPAYGKYTDAAGKNYGAAQPGRTMTVPKTAMAPKPATTTTVTRGGFGESVAKQSTMQRSAAGTSTRSMGG</sequence>
<gene>
    <name evidence="1" type="primary">ygiB</name>
    <name type="ordered locus">SPA3056</name>
</gene>
<accession>Q5PMT8</accession>
<reference key="1">
    <citation type="journal article" date="2004" name="Nat. Genet.">
        <title>Comparison of genome degradation in Paratyphi A and Typhi, human-restricted serovars of Salmonella enterica that cause typhoid.</title>
        <authorList>
            <person name="McClelland M."/>
            <person name="Sanderson K.E."/>
            <person name="Clifton S.W."/>
            <person name="Latreille P."/>
            <person name="Porwollik S."/>
            <person name="Sabo A."/>
            <person name="Meyer R."/>
            <person name="Bieri T."/>
            <person name="Ozersky P."/>
            <person name="McLellan M."/>
            <person name="Harkins C.R."/>
            <person name="Wang C."/>
            <person name="Nguyen C."/>
            <person name="Berghoff A."/>
            <person name="Elliott G."/>
            <person name="Kohlberg S."/>
            <person name="Strong C."/>
            <person name="Du F."/>
            <person name="Carter J."/>
            <person name="Kremizki C."/>
            <person name="Layman D."/>
            <person name="Leonard S."/>
            <person name="Sun H."/>
            <person name="Fulton L."/>
            <person name="Nash W."/>
            <person name="Miner T."/>
            <person name="Minx P."/>
            <person name="Delehaunty K."/>
            <person name="Fronick C."/>
            <person name="Magrini V."/>
            <person name="Nhan M."/>
            <person name="Warren W."/>
            <person name="Florea L."/>
            <person name="Spieth J."/>
            <person name="Wilson R.K."/>
        </authorList>
    </citation>
    <scope>NUCLEOTIDE SEQUENCE [LARGE SCALE GENOMIC DNA]</scope>
    <source>
        <strain>ATCC 9150 / SARB42</strain>
    </source>
</reference>